<dbReference type="EC" id="5.2.1.8" evidence="1"/>
<dbReference type="EMBL" id="CP000388">
    <property type="protein sequence ID" value="ABG41925.1"/>
    <property type="molecule type" value="Genomic_DNA"/>
</dbReference>
<dbReference type="RefSeq" id="WP_011576154.1">
    <property type="nucleotide sequence ID" value="NC_008228.1"/>
</dbReference>
<dbReference type="SMR" id="Q15QB3"/>
<dbReference type="STRING" id="342610.Patl_3419"/>
<dbReference type="KEGG" id="pat:Patl_3419"/>
<dbReference type="eggNOG" id="COG0760">
    <property type="taxonomic scope" value="Bacteria"/>
</dbReference>
<dbReference type="HOGENOM" id="CLU_034646_11_0_6"/>
<dbReference type="OrthoDB" id="14196at2"/>
<dbReference type="Proteomes" id="UP000001981">
    <property type="component" value="Chromosome"/>
</dbReference>
<dbReference type="GO" id="GO:0030288">
    <property type="term" value="C:outer membrane-bounded periplasmic space"/>
    <property type="evidence" value="ECO:0007669"/>
    <property type="project" value="InterPro"/>
</dbReference>
<dbReference type="GO" id="GO:0042277">
    <property type="term" value="F:peptide binding"/>
    <property type="evidence" value="ECO:0007669"/>
    <property type="project" value="InterPro"/>
</dbReference>
<dbReference type="GO" id="GO:0003755">
    <property type="term" value="F:peptidyl-prolyl cis-trans isomerase activity"/>
    <property type="evidence" value="ECO:0007669"/>
    <property type="project" value="UniProtKB-UniRule"/>
</dbReference>
<dbReference type="GO" id="GO:0051082">
    <property type="term" value="F:unfolded protein binding"/>
    <property type="evidence" value="ECO:0007669"/>
    <property type="project" value="UniProtKB-UniRule"/>
</dbReference>
<dbReference type="GO" id="GO:0043165">
    <property type="term" value="P:Gram-negative-bacterium-type cell outer membrane assembly"/>
    <property type="evidence" value="ECO:0007669"/>
    <property type="project" value="InterPro"/>
</dbReference>
<dbReference type="GO" id="GO:0006457">
    <property type="term" value="P:protein folding"/>
    <property type="evidence" value="ECO:0007669"/>
    <property type="project" value="UniProtKB-UniRule"/>
</dbReference>
<dbReference type="GO" id="GO:0050821">
    <property type="term" value="P:protein stabilization"/>
    <property type="evidence" value="ECO:0007669"/>
    <property type="project" value="InterPro"/>
</dbReference>
<dbReference type="Gene3D" id="3.10.50.40">
    <property type="match status" value="2"/>
</dbReference>
<dbReference type="Gene3D" id="1.10.4030.10">
    <property type="entry name" value="Porin chaperone SurA, peptide-binding domain"/>
    <property type="match status" value="2"/>
</dbReference>
<dbReference type="HAMAP" id="MF_01183">
    <property type="entry name" value="Chaperone_SurA"/>
    <property type="match status" value="1"/>
</dbReference>
<dbReference type="InterPro" id="IPR050280">
    <property type="entry name" value="OMP_Chaperone_SurA"/>
</dbReference>
<dbReference type="InterPro" id="IPR046357">
    <property type="entry name" value="PPIase_dom_sf"/>
</dbReference>
<dbReference type="InterPro" id="IPR000297">
    <property type="entry name" value="PPIase_PpiC"/>
</dbReference>
<dbReference type="InterPro" id="IPR023058">
    <property type="entry name" value="PPIase_PpiC_CS"/>
</dbReference>
<dbReference type="InterPro" id="IPR023034">
    <property type="entry name" value="PPIase_SurA"/>
</dbReference>
<dbReference type="InterPro" id="IPR015391">
    <property type="entry name" value="SurA_N"/>
</dbReference>
<dbReference type="InterPro" id="IPR027304">
    <property type="entry name" value="Trigger_fact/SurA_dom_sf"/>
</dbReference>
<dbReference type="NCBIfam" id="NF008038">
    <property type="entry name" value="PRK10770.1"/>
    <property type="match status" value="1"/>
</dbReference>
<dbReference type="PANTHER" id="PTHR47637">
    <property type="entry name" value="CHAPERONE SURA"/>
    <property type="match status" value="1"/>
</dbReference>
<dbReference type="PANTHER" id="PTHR47637:SF1">
    <property type="entry name" value="CHAPERONE SURA"/>
    <property type="match status" value="1"/>
</dbReference>
<dbReference type="Pfam" id="PF00639">
    <property type="entry name" value="Rotamase"/>
    <property type="match status" value="2"/>
</dbReference>
<dbReference type="Pfam" id="PF09312">
    <property type="entry name" value="SurA_N"/>
    <property type="match status" value="1"/>
</dbReference>
<dbReference type="SUPFAM" id="SSF54534">
    <property type="entry name" value="FKBP-like"/>
    <property type="match status" value="2"/>
</dbReference>
<dbReference type="SUPFAM" id="SSF109998">
    <property type="entry name" value="Triger factor/SurA peptide-binding domain-like"/>
    <property type="match status" value="1"/>
</dbReference>
<dbReference type="PROSITE" id="PS01096">
    <property type="entry name" value="PPIC_PPIASE_1"/>
    <property type="match status" value="1"/>
</dbReference>
<dbReference type="PROSITE" id="PS50198">
    <property type="entry name" value="PPIC_PPIASE_2"/>
    <property type="match status" value="2"/>
</dbReference>
<evidence type="ECO:0000255" key="1">
    <source>
        <dbReference type="HAMAP-Rule" id="MF_01183"/>
    </source>
</evidence>
<accession>Q15QB3</accession>
<organism>
    <name type="scientific">Pseudoalteromonas atlantica (strain T6c / ATCC BAA-1087)</name>
    <dbReference type="NCBI Taxonomy" id="3042615"/>
    <lineage>
        <taxon>Bacteria</taxon>
        <taxon>Pseudomonadati</taxon>
        <taxon>Pseudomonadota</taxon>
        <taxon>Gammaproteobacteria</taxon>
        <taxon>Alteromonadales</taxon>
        <taxon>Alteromonadaceae</taxon>
        <taxon>Paraglaciecola</taxon>
    </lineage>
</organism>
<gene>
    <name evidence="1" type="primary">surA</name>
    <name type="ordered locus">Patl_3419</name>
</gene>
<sequence length="431" mass="48219">MKLTVVTFALLAFISFNTFAKQVRLDNVAVIVDQGVVLESQIEELVNTVKRNALTNNQTLPSDRVLRTQAIERLIVDSLQNQMAERMGIQISDPQLDQTIDNIAREDGTTVEDLRKNLASEGVSFEVYREQVRKELVTGEVRRANVRRRIYITPQEISNLVTLIDEQGGQQAEYHLGHILIGFPPEPTDEDVSKAKDTAEKVLELLNNGSEFAKIATASSSGSKALEGGDLGWMNINSMPTLFAEAVQGTSKDDLIGPIRSGAGFHVLKIIDFRGIEKVEVAELKSRHILIKPSVILSDEKAEKMLTEFRKELLAGEADFAELAKEHSADPGSALRGGDLGWADPNVYVPAFRDTLQSLEVGEISQPVRSTHGWHLMQLMDKRVQDATEKRKEDKAYQLLFQRKFAEETEAWLKEMRDSAYVELLDEKDNS</sequence>
<protein>
    <recommendedName>
        <fullName evidence="1">Chaperone SurA</fullName>
    </recommendedName>
    <alternativeName>
        <fullName evidence="1">Peptidyl-prolyl cis-trans isomerase SurA</fullName>
        <shortName evidence="1">PPIase SurA</shortName>
        <ecNumber evidence="1">5.2.1.8</ecNumber>
    </alternativeName>
    <alternativeName>
        <fullName evidence="1">Rotamase SurA</fullName>
    </alternativeName>
</protein>
<keyword id="KW-0143">Chaperone</keyword>
<keyword id="KW-0413">Isomerase</keyword>
<keyword id="KW-0574">Periplasm</keyword>
<keyword id="KW-0677">Repeat</keyword>
<keyword id="KW-0697">Rotamase</keyword>
<keyword id="KW-0732">Signal</keyword>
<feature type="signal peptide" evidence="1">
    <location>
        <begin position="1"/>
        <end position="20"/>
    </location>
</feature>
<feature type="chain" id="PRO_5000125744" description="Chaperone SurA">
    <location>
        <begin position="21"/>
        <end position="431"/>
    </location>
</feature>
<feature type="domain" description="PpiC 1" evidence="1">
    <location>
        <begin position="171"/>
        <end position="272"/>
    </location>
</feature>
<feature type="domain" description="PpiC 2" evidence="1">
    <location>
        <begin position="281"/>
        <end position="381"/>
    </location>
</feature>
<reference key="1">
    <citation type="submission" date="2006-06" db="EMBL/GenBank/DDBJ databases">
        <title>Complete sequence of Pseudoalteromonas atlantica T6c.</title>
        <authorList>
            <consortium name="US DOE Joint Genome Institute"/>
            <person name="Copeland A."/>
            <person name="Lucas S."/>
            <person name="Lapidus A."/>
            <person name="Barry K."/>
            <person name="Detter J.C."/>
            <person name="Glavina del Rio T."/>
            <person name="Hammon N."/>
            <person name="Israni S."/>
            <person name="Dalin E."/>
            <person name="Tice H."/>
            <person name="Pitluck S."/>
            <person name="Saunders E."/>
            <person name="Brettin T."/>
            <person name="Bruce D."/>
            <person name="Han C."/>
            <person name="Tapia R."/>
            <person name="Gilna P."/>
            <person name="Schmutz J."/>
            <person name="Larimer F."/>
            <person name="Land M."/>
            <person name="Hauser L."/>
            <person name="Kyrpides N."/>
            <person name="Kim E."/>
            <person name="Karls A.C."/>
            <person name="Bartlett D."/>
            <person name="Higgins B.P."/>
            <person name="Richardson P."/>
        </authorList>
    </citation>
    <scope>NUCLEOTIDE SEQUENCE [LARGE SCALE GENOMIC DNA]</scope>
    <source>
        <strain>T6c / ATCC BAA-1087</strain>
    </source>
</reference>
<comment type="function">
    <text evidence="1">Chaperone involved in the correct folding and assembly of outer membrane proteins. Recognizes specific patterns of aromatic residues and the orientation of their side chains, which are found more frequently in integral outer membrane proteins. May act in both early periplasmic and late outer membrane-associated steps of protein maturation.</text>
</comment>
<comment type="catalytic activity">
    <reaction evidence="1">
        <text>[protein]-peptidylproline (omega=180) = [protein]-peptidylproline (omega=0)</text>
        <dbReference type="Rhea" id="RHEA:16237"/>
        <dbReference type="Rhea" id="RHEA-COMP:10747"/>
        <dbReference type="Rhea" id="RHEA-COMP:10748"/>
        <dbReference type="ChEBI" id="CHEBI:83833"/>
        <dbReference type="ChEBI" id="CHEBI:83834"/>
        <dbReference type="EC" id="5.2.1.8"/>
    </reaction>
</comment>
<comment type="subcellular location">
    <subcellularLocation>
        <location evidence="1">Periplasm</location>
    </subcellularLocation>
    <text evidence="1">Is capable of associating with the outer membrane.</text>
</comment>
<comment type="domain">
    <text evidence="1">The PPIase activity resides only in the second parvulin domain. The N-terminal region and the C-terminal tail are necessary and sufficient for the chaperone activity of SurA. The PPIase activity is dispensable for SurA to function as a chaperone. The N-terminal region and the C-terminal tail are also required for porin recognition.</text>
</comment>
<name>SURA_PSEA6</name>
<proteinExistence type="inferred from homology"/>